<dbReference type="EC" id="1.1.1.27" evidence="1"/>
<dbReference type="EMBL" id="BA000004">
    <property type="protein sequence ID" value="BAB07656.1"/>
    <property type="molecule type" value="Genomic_DNA"/>
</dbReference>
<dbReference type="PIR" id="A84142">
    <property type="entry name" value="A84142"/>
</dbReference>
<dbReference type="RefSeq" id="WP_010900062.1">
    <property type="nucleotide sequence ID" value="NC_002570.2"/>
</dbReference>
<dbReference type="SMR" id="Q9K5Z8"/>
<dbReference type="STRING" id="272558.gene:10729850"/>
<dbReference type="KEGG" id="bha:BH3937"/>
<dbReference type="eggNOG" id="COG0039">
    <property type="taxonomic scope" value="Bacteria"/>
</dbReference>
<dbReference type="HOGENOM" id="CLU_045401_1_1_9"/>
<dbReference type="OrthoDB" id="9802969at2"/>
<dbReference type="UniPathway" id="UPA00554">
    <property type="reaction ID" value="UER00611"/>
</dbReference>
<dbReference type="Proteomes" id="UP000001258">
    <property type="component" value="Chromosome"/>
</dbReference>
<dbReference type="GO" id="GO:0005737">
    <property type="term" value="C:cytoplasm"/>
    <property type="evidence" value="ECO:0007669"/>
    <property type="project" value="UniProtKB-SubCell"/>
</dbReference>
<dbReference type="GO" id="GO:0004459">
    <property type="term" value="F:L-lactate dehydrogenase activity"/>
    <property type="evidence" value="ECO:0007669"/>
    <property type="project" value="UniProtKB-UniRule"/>
</dbReference>
<dbReference type="GO" id="GO:0006096">
    <property type="term" value="P:glycolytic process"/>
    <property type="evidence" value="ECO:0007669"/>
    <property type="project" value="UniProtKB-UniRule"/>
</dbReference>
<dbReference type="GO" id="GO:0006089">
    <property type="term" value="P:lactate metabolic process"/>
    <property type="evidence" value="ECO:0007669"/>
    <property type="project" value="TreeGrafter"/>
</dbReference>
<dbReference type="CDD" id="cd05291">
    <property type="entry name" value="HicDH_like"/>
    <property type="match status" value="1"/>
</dbReference>
<dbReference type="FunFam" id="3.40.50.720:FF:000018">
    <property type="entry name" value="Malate dehydrogenase"/>
    <property type="match status" value="1"/>
</dbReference>
<dbReference type="Gene3D" id="3.90.110.10">
    <property type="entry name" value="Lactate dehydrogenase/glycoside hydrolase, family 4, C-terminal"/>
    <property type="match status" value="1"/>
</dbReference>
<dbReference type="Gene3D" id="3.40.50.720">
    <property type="entry name" value="NAD(P)-binding Rossmann-like Domain"/>
    <property type="match status" value="1"/>
</dbReference>
<dbReference type="HAMAP" id="MF_00488">
    <property type="entry name" value="Lactate_dehydrog"/>
    <property type="match status" value="1"/>
</dbReference>
<dbReference type="InterPro" id="IPR001557">
    <property type="entry name" value="L-lactate/malate_DH"/>
</dbReference>
<dbReference type="InterPro" id="IPR011304">
    <property type="entry name" value="L-lactate_DH"/>
</dbReference>
<dbReference type="InterPro" id="IPR018177">
    <property type="entry name" value="L-lactate_DH_AS"/>
</dbReference>
<dbReference type="InterPro" id="IPR022383">
    <property type="entry name" value="Lactate/malate_DH_C"/>
</dbReference>
<dbReference type="InterPro" id="IPR001236">
    <property type="entry name" value="Lactate/malate_DH_N"/>
</dbReference>
<dbReference type="InterPro" id="IPR015955">
    <property type="entry name" value="Lactate_DH/Glyco_Ohase_4_C"/>
</dbReference>
<dbReference type="InterPro" id="IPR036291">
    <property type="entry name" value="NAD(P)-bd_dom_sf"/>
</dbReference>
<dbReference type="NCBIfam" id="TIGR01771">
    <property type="entry name" value="L-LDH-NAD"/>
    <property type="match status" value="1"/>
</dbReference>
<dbReference type="NCBIfam" id="NF000824">
    <property type="entry name" value="PRK00066.1"/>
    <property type="match status" value="1"/>
</dbReference>
<dbReference type="NCBIfam" id="NF004863">
    <property type="entry name" value="PRK06223.1"/>
    <property type="match status" value="1"/>
</dbReference>
<dbReference type="PANTHER" id="PTHR43128">
    <property type="entry name" value="L-2-HYDROXYCARBOXYLATE DEHYDROGENASE (NAD(P)(+))"/>
    <property type="match status" value="1"/>
</dbReference>
<dbReference type="PANTHER" id="PTHR43128:SF16">
    <property type="entry name" value="L-LACTATE DEHYDROGENASE"/>
    <property type="match status" value="1"/>
</dbReference>
<dbReference type="Pfam" id="PF02866">
    <property type="entry name" value="Ldh_1_C"/>
    <property type="match status" value="1"/>
</dbReference>
<dbReference type="Pfam" id="PF00056">
    <property type="entry name" value="Ldh_1_N"/>
    <property type="match status" value="1"/>
</dbReference>
<dbReference type="PIRSF" id="PIRSF000102">
    <property type="entry name" value="Lac_mal_DH"/>
    <property type="match status" value="1"/>
</dbReference>
<dbReference type="PRINTS" id="PR00086">
    <property type="entry name" value="LLDHDRGNASE"/>
</dbReference>
<dbReference type="SUPFAM" id="SSF56327">
    <property type="entry name" value="LDH C-terminal domain-like"/>
    <property type="match status" value="1"/>
</dbReference>
<dbReference type="SUPFAM" id="SSF51735">
    <property type="entry name" value="NAD(P)-binding Rossmann-fold domains"/>
    <property type="match status" value="1"/>
</dbReference>
<dbReference type="PROSITE" id="PS00064">
    <property type="entry name" value="L_LDH"/>
    <property type="match status" value="1"/>
</dbReference>
<organism>
    <name type="scientific">Halalkalibacterium halodurans (strain ATCC BAA-125 / DSM 18197 / FERM 7344 / JCM 9153 / C-125)</name>
    <name type="common">Bacillus halodurans</name>
    <dbReference type="NCBI Taxonomy" id="272558"/>
    <lineage>
        <taxon>Bacteria</taxon>
        <taxon>Bacillati</taxon>
        <taxon>Bacillota</taxon>
        <taxon>Bacilli</taxon>
        <taxon>Bacillales</taxon>
        <taxon>Bacillaceae</taxon>
        <taxon>Halalkalibacterium (ex Joshi et al. 2022)</taxon>
    </lineage>
</organism>
<feature type="chain" id="PRO_0000168324" description="L-lactate dehydrogenase">
    <location>
        <begin position="1"/>
        <end position="310"/>
    </location>
</feature>
<feature type="active site" description="Proton acceptor" evidence="1">
    <location>
        <position position="179"/>
    </location>
</feature>
<feature type="binding site" evidence="1">
    <location>
        <position position="17"/>
    </location>
    <ligand>
        <name>NAD(+)</name>
        <dbReference type="ChEBI" id="CHEBI:57540"/>
    </ligand>
</feature>
<feature type="binding site" evidence="1">
    <location>
        <position position="38"/>
    </location>
    <ligand>
        <name>NAD(+)</name>
        <dbReference type="ChEBI" id="CHEBI:57540"/>
    </ligand>
</feature>
<feature type="binding site" evidence="1">
    <location>
        <position position="43"/>
    </location>
    <ligand>
        <name>NAD(+)</name>
        <dbReference type="ChEBI" id="CHEBI:57540"/>
    </ligand>
</feature>
<feature type="binding site" evidence="1">
    <location>
        <position position="69"/>
    </location>
    <ligand>
        <name>NAD(+)</name>
        <dbReference type="ChEBI" id="CHEBI:57540"/>
    </ligand>
</feature>
<feature type="binding site" evidence="1">
    <location>
        <begin position="83"/>
        <end position="84"/>
    </location>
    <ligand>
        <name>NAD(+)</name>
        <dbReference type="ChEBI" id="CHEBI:57540"/>
    </ligand>
</feature>
<feature type="binding site" evidence="1">
    <location>
        <position position="86"/>
    </location>
    <ligand>
        <name>substrate</name>
    </ligand>
</feature>
<feature type="binding site" evidence="1">
    <location>
        <position position="92"/>
    </location>
    <ligand>
        <name>substrate</name>
    </ligand>
</feature>
<feature type="binding site" evidence="1">
    <location>
        <position position="105"/>
    </location>
    <ligand>
        <name>NAD(+)</name>
        <dbReference type="ChEBI" id="CHEBI:57540"/>
    </ligand>
</feature>
<feature type="binding site" evidence="1">
    <location>
        <begin position="122"/>
        <end position="124"/>
    </location>
    <ligand>
        <name>NAD(+)</name>
        <dbReference type="ChEBI" id="CHEBI:57540"/>
    </ligand>
</feature>
<feature type="binding site" evidence="1">
    <location>
        <begin position="124"/>
        <end position="127"/>
    </location>
    <ligand>
        <name>substrate</name>
    </ligand>
</feature>
<feature type="binding site" evidence="1">
    <location>
        <position position="147"/>
    </location>
    <ligand>
        <name>NAD(+)</name>
        <dbReference type="ChEBI" id="CHEBI:57540"/>
    </ligand>
</feature>
<feature type="binding site" evidence="1">
    <location>
        <begin position="152"/>
        <end position="155"/>
    </location>
    <ligand>
        <name>substrate</name>
    </ligand>
</feature>
<feature type="binding site" evidence="1">
    <location>
        <position position="157"/>
    </location>
    <ligand>
        <name>beta-D-fructose 1,6-bisphosphate</name>
        <dbReference type="ChEBI" id="CHEBI:32966"/>
        <note>allosteric activator</note>
    </ligand>
</feature>
<feature type="binding site" evidence="1">
    <location>
        <position position="172"/>
    </location>
    <ligand>
        <name>beta-D-fructose 1,6-bisphosphate</name>
        <dbReference type="ChEBI" id="CHEBI:32966"/>
        <note>allosteric activator</note>
    </ligand>
</feature>
<feature type="binding site" evidence="1">
    <location>
        <position position="227"/>
    </location>
    <ligand>
        <name>substrate</name>
    </ligand>
</feature>
<feature type="modified residue" description="Phosphotyrosine" evidence="1">
    <location>
        <position position="218"/>
    </location>
</feature>
<reference key="1">
    <citation type="journal article" date="2000" name="Nucleic Acids Res.">
        <title>Complete genome sequence of the alkaliphilic bacterium Bacillus halodurans and genomic sequence comparison with Bacillus subtilis.</title>
        <authorList>
            <person name="Takami H."/>
            <person name="Nakasone K."/>
            <person name="Takaki Y."/>
            <person name="Maeno G."/>
            <person name="Sasaki R."/>
            <person name="Masui N."/>
            <person name="Fuji F."/>
            <person name="Hirama C."/>
            <person name="Nakamura Y."/>
            <person name="Ogasawara N."/>
            <person name="Kuhara S."/>
            <person name="Horikoshi K."/>
        </authorList>
    </citation>
    <scope>NUCLEOTIDE SEQUENCE [LARGE SCALE GENOMIC DNA]</scope>
    <source>
        <strain>ATCC BAA-125 / DSM 18197 / FERM 7344 / JCM 9153 / C-125</strain>
    </source>
</reference>
<accession>Q9K5Z8</accession>
<gene>
    <name evidence="1" type="primary">ldh</name>
    <name type="synonym">lctE</name>
    <name type="ordered locus">BH3937</name>
</gene>
<name>LDH_HALH5</name>
<comment type="function">
    <text evidence="1">Catalyzes the conversion of lactate to pyruvate.</text>
</comment>
<comment type="catalytic activity">
    <reaction evidence="1">
        <text>(S)-lactate + NAD(+) = pyruvate + NADH + H(+)</text>
        <dbReference type="Rhea" id="RHEA:23444"/>
        <dbReference type="ChEBI" id="CHEBI:15361"/>
        <dbReference type="ChEBI" id="CHEBI:15378"/>
        <dbReference type="ChEBI" id="CHEBI:16651"/>
        <dbReference type="ChEBI" id="CHEBI:57540"/>
        <dbReference type="ChEBI" id="CHEBI:57945"/>
        <dbReference type="EC" id="1.1.1.27"/>
    </reaction>
</comment>
<comment type="activity regulation">
    <text evidence="1">Allosterically activated by fructose 1,6-bisphosphate (FBP).</text>
</comment>
<comment type="pathway">
    <text evidence="1">Fermentation; pyruvate fermentation to lactate; (S)-lactate from pyruvate: step 1/1.</text>
</comment>
<comment type="subunit">
    <text evidence="1">Homotetramer.</text>
</comment>
<comment type="subcellular location">
    <subcellularLocation>
        <location evidence="1">Cytoplasm</location>
    </subcellularLocation>
</comment>
<comment type="similarity">
    <text evidence="1 2">Belongs to the LDH/MDH superfamily. LDH family.</text>
</comment>
<evidence type="ECO:0000255" key="1">
    <source>
        <dbReference type="HAMAP-Rule" id="MF_00488"/>
    </source>
</evidence>
<evidence type="ECO:0000305" key="2"/>
<keyword id="KW-0021">Allosteric enzyme</keyword>
<keyword id="KW-0963">Cytoplasm</keyword>
<keyword id="KW-0520">NAD</keyword>
<keyword id="KW-0560">Oxidoreductase</keyword>
<keyword id="KW-0597">Phosphoprotein</keyword>
<keyword id="KW-1185">Reference proteome</keyword>
<protein>
    <recommendedName>
        <fullName evidence="1">L-lactate dehydrogenase</fullName>
        <shortName evidence="1">L-LDH</shortName>
        <ecNumber evidence="1">1.1.1.27</ecNumber>
    </recommendedName>
</protein>
<sequence length="310" mass="33406">MAITKGNKIVLVGTGAVGSSYAYALMNQGISDELILVDLNEEKAKGDVLDLNHSIVYAPSPMEIKFGSYEDCKDAALVVICAGAAQKPGETRLDLVHKNVGIFESIVGNIMKSGFNGIFLVATNPVDILAYATWKFSGLPKERVIGSGTVLDTARFRYLLGEEMNAAPTSVHGYIIGEHGDSQLPVWSSATIAGTPIAPRLTDEKKQEIAENVRDAAYKIIEAKGATYYGIATGLARITRAILKNENVVLPVGTLLEGENGHDDVYIGVPAIINREGVRQVVELSLNDEEKEKFARSVETLKDIQAAIWS</sequence>
<proteinExistence type="inferred from homology"/>